<organism>
    <name type="scientific">Arabidopsis thaliana</name>
    <name type="common">Mouse-ear cress</name>
    <dbReference type="NCBI Taxonomy" id="3702"/>
    <lineage>
        <taxon>Eukaryota</taxon>
        <taxon>Viridiplantae</taxon>
        <taxon>Streptophyta</taxon>
        <taxon>Embryophyta</taxon>
        <taxon>Tracheophyta</taxon>
        <taxon>Spermatophyta</taxon>
        <taxon>Magnoliopsida</taxon>
        <taxon>eudicotyledons</taxon>
        <taxon>Gunneridae</taxon>
        <taxon>Pentapetalae</taxon>
        <taxon>rosids</taxon>
        <taxon>malvids</taxon>
        <taxon>Brassicales</taxon>
        <taxon>Brassicaceae</taxon>
        <taxon>Camelineae</taxon>
        <taxon>Arabidopsis</taxon>
    </lineage>
</organism>
<sequence length="72" mass="7880">MKAWVIGLLVICAVVIAEPVESRNYIEYGAINKCAGPNPPPGCNPPGTEQKNPTPVNEYSRGCSKIHRCRRD</sequence>
<proteinExistence type="evidence at transcript level"/>
<feature type="signal peptide" evidence="2">
    <location>
        <begin position="1"/>
        <end position="17"/>
    </location>
</feature>
<feature type="chain" id="PRO_0000420303" description="Protein RALF-like 12">
    <location>
        <begin position="18"/>
        <end position="72"/>
    </location>
</feature>
<feature type="region of interest" description="Disordered" evidence="3">
    <location>
        <begin position="37"/>
        <end position="60"/>
    </location>
</feature>
<feature type="disulfide bond" evidence="1">
    <location>
        <begin position="34"/>
        <end position="43"/>
    </location>
</feature>
<feature type="disulfide bond" evidence="1">
    <location>
        <begin position="63"/>
        <end position="69"/>
    </location>
</feature>
<comment type="function">
    <text evidence="1">Cell signaling peptide that may regulate plant stress, growth, and development. Mediates a rapid alkalinization of extracellular space by mediating a transient increase in the cytoplasmic Ca(2+) concentration leading to a calcium-dependent signaling events through a cell surface receptor and a concomitant activation of some intracellular mitogen-activated protein kinases (By similarity).</text>
</comment>
<comment type="subcellular location">
    <subcellularLocation>
        <location evidence="1">Secreted</location>
    </subcellularLocation>
</comment>
<comment type="similarity">
    <text evidence="4">Belongs to the plant rapid alkalinization factor (RALF) family.</text>
</comment>
<comment type="sequence caution" evidence="4">
    <conflict type="erroneous gene model prediction">
        <sequence resource="EMBL-CDS" id="AAD12022"/>
    </conflict>
</comment>
<protein>
    <recommendedName>
        <fullName>Protein RALF-like 12</fullName>
    </recommendedName>
</protein>
<evidence type="ECO:0000250" key="1"/>
<evidence type="ECO:0000255" key="2"/>
<evidence type="ECO:0000256" key="3">
    <source>
        <dbReference type="SAM" id="MobiDB-lite"/>
    </source>
</evidence>
<evidence type="ECO:0000305" key="4"/>
<dbReference type="EMBL" id="AC002392">
    <property type="protein sequence ID" value="AAD12022.1"/>
    <property type="status" value="ALT_SEQ"/>
    <property type="molecule type" value="Genomic_DNA"/>
</dbReference>
<dbReference type="EMBL" id="CP002685">
    <property type="protein sequence ID" value="AEC06841.1"/>
    <property type="molecule type" value="Genomic_DNA"/>
</dbReference>
<dbReference type="PIR" id="T00524">
    <property type="entry name" value="T00524"/>
</dbReference>
<dbReference type="RefSeq" id="NP_179494.2">
    <property type="nucleotide sequence ID" value="NM_127461.3"/>
</dbReference>
<dbReference type="STRING" id="3702.F4ISE1"/>
<dbReference type="PaxDb" id="3702-AT2G19040.1"/>
<dbReference type="EnsemblPlants" id="AT2G19040.1">
    <property type="protein sequence ID" value="AT2G19040.1"/>
    <property type="gene ID" value="AT2G19040"/>
</dbReference>
<dbReference type="GeneID" id="816421"/>
<dbReference type="Gramene" id="AT2G19040.1">
    <property type="protein sequence ID" value="AT2G19040.1"/>
    <property type="gene ID" value="AT2G19040"/>
</dbReference>
<dbReference type="KEGG" id="ath:AT2G19040"/>
<dbReference type="Araport" id="AT2G19040"/>
<dbReference type="TAIR" id="AT2G19040">
    <property type="gene designation" value="RALFL12"/>
</dbReference>
<dbReference type="eggNOG" id="ENOG502SYWJ">
    <property type="taxonomic scope" value="Eukaryota"/>
</dbReference>
<dbReference type="HOGENOM" id="CLU_200725_0_0_1"/>
<dbReference type="InParanoid" id="F4ISE1"/>
<dbReference type="OMA" id="YGVINEC"/>
<dbReference type="OrthoDB" id="1096141at2759"/>
<dbReference type="PRO" id="PR:F4ISE1"/>
<dbReference type="Proteomes" id="UP000006548">
    <property type="component" value="Chromosome 2"/>
</dbReference>
<dbReference type="ExpressionAtlas" id="F4ISE1">
    <property type="expression patterns" value="baseline"/>
</dbReference>
<dbReference type="GO" id="GO:0048046">
    <property type="term" value="C:apoplast"/>
    <property type="evidence" value="ECO:0000250"/>
    <property type="project" value="TAIR"/>
</dbReference>
<dbReference type="GO" id="GO:0005179">
    <property type="term" value="F:hormone activity"/>
    <property type="evidence" value="ECO:0000250"/>
    <property type="project" value="UniProtKB"/>
</dbReference>
<dbReference type="GO" id="GO:0019722">
    <property type="term" value="P:calcium-mediated signaling"/>
    <property type="evidence" value="ECO:0000250"/>
    <property type="project" value="UniProtKB"/>
</dbReference>
<dbReference type="GO" id="GO:0007267">
    <property type="term" value="P:cell-cell signaling"/>
    <property type="evidence" value="ECO:0000250"/>
    <property type="project" value="TAIR"/>
</dbReference>
<dbReference type="GO" id="GO:0040008">
    <property type="term" value="P:regulation of growth"/>
    <property type="evidence" value="ECO:0007669"/>
    <property type="project" value="UniProtKB-ARBA"/>
</dbReference>
<dbReference type="InterPro" id="IPR008801">
    <property type="entry name" value="RALF"/>
</dbReference>
<dbReference type="PANTHER" id="PTHR34270:SF5">
    <property type="entry name" value="PROTEIN RALF-LIKE 10-RELATED"/>
    <property type="match status" value="1"/>
</dbReference>
<dbReference type="PANTHER" id="PTHR34270">
    <property type="entry name" value="PROTEIN RALF-LIKE 15-RELATED"/>
    <property type="match status" value="1"/>
</dbReference>
<dbReference type="Pfam" id="PF05498">
    <property type="entry name" value="RALF"/>
    <property type="match status" value="1"/>
</dbReference>
<name>RLF12_ARATH</name>
<gene>
    <name type="primary">RALFL12</name>
    <name type="ordered locus">At2g19040</name>
    <name type="ORF">T20K24.5</name>
</gene>
<keyword id="KW-1015">Disulfide bond</keyword>
<keyword id="KW-0372">Hormone</keyword>
<keyword id="KW-1185">Reference proteome</keyword>
<keyword id="KW-0964">Secreted</keyword>
<keyword id="KW-0732">Signal</keyword>
<reference key="1">
    <citation type="journal article" date="1999" name="Nature">
        <title>Sequence and analysis of chromosome 2 of the plant Arabidopsis thaliana.</title>
        <authorList>
            <person name="Lin X."/>
            <person name="Kaul S."/>
            <person name="Rounsley S.D."/>
            <person name="Shea T.P."/>
            <person name="Benito M.-I."/>
            <person name="Town C.D."/>
            <person name="Fujii C.Y."/>
            <person name="Mason T.M."/>
            <person name="Bowman C.L."/>
            <person name="Barnstead M.E."/>
            <person name="Feldblyum T.V."/>
            <person name="Buell C.R."/>
            <person name="Ketchum K.A."/>
            <person name="Lee J.J."/>
            <person name="Ronning C.M."/>
            <person name="Koo H.L."/>
            <person name="Moffat K.S."/>
            <person name="Cronin L.A."/>
            <person name="Shen M."/>
            <person name="Pai G."/>
            <person name="Van Aken S."/>
            <person name="Umayam L."/>
            <person name="Tallon L.J."/>
            <person name="Gill J.E."/>
            <person name="Adams M.D."/>
            <person name="Carrera A.J."/>
            <person name="Creasy T.H."/>
            <person name="Goodman H.M."/>
            <person name="Somerville C.R."/>
            <person name="Copenhaver G.P."/>
            <person name="Preuss D."/>
            <person name="Nierman W.C."/>
            <person name="White O."/>
            <person name="Eisen J.A."/>
            <person name="Salzberg S.L."/>
            <person name="Fraser C.M."/>
            <person name="Venter J.C."/>
        </authorList>
    </citation>
    <scope>NUCLEOTIDE SEQUENCE [LARGE SCALE GENOMIC DNA]</scope>
    <source>
        <strain>cv. Columbia</strain>
    </source>
</reference>
<reference key="2">
    <citation type="journal article" date="2017" name="Plant J.">
        <title>Araport11: a complete reannotation of the Arabidopsis thaliana reference genome.</title>
        <authorList>
            <person name="Cheng C.Y."/>
            <person name="Krishnakumar V."/>
            <person name="Chan A.P."/>
            <person name="Thibaud-Nissen F."/>
            <person name="Schobel S."/>
            <person name="Town C.D."/>
        </authorList>
    </citation>
    <scope>GENOME REANNOTATION</scope>
    <source>
        <strain>cv. Columbia</strain>
    </source>
</reference>
<reference key="3">
    <citation type="journal article" date="2002" name="In Silico Biol.">
        <title>Peptomics, identification of novel cationic Arabidopsis peptides with conserved sequence motifs.</title>
        <authorList>
            <person name="Olsen A.N."/>
            <person name="Mundy J."/>
            <person name="Skriver K."/>
        </authorList>
    </citation>
    <scope>GENE FAMILY</scope>
    <scope>NOMENCLATURE</scope>
</reference>
<accession>F4ISE1</accession>
<accession>O64467</accession>